<reference key="1">
    <citation type="submission" date="2007-03" db="EMBL/GenBank/DDBJ databases">
        <title>Complete sequence of chromosome of Methanococcus maripaludis C5.</title>
        <authorList>
            <consortium name="US DOE Joint Genome Institute"/>
            <person name="Copeland A."/>
            <person name="Lucas S."/>
            <person name="Lapidus A."/>
            <person name="Barry K."/>
            <person name="Glavina del Rio T."/>
            <person name="Dalin E."/>
            <person name="Tice H."/>
            <person name="Pitluck S."/>
            <person name="Chertkov O."/>
            <person name="Brettin T."/>
            <person name="Bruce D."/>
            <person name="Han C."/>
            <person name="Detter J.C."/>
            <person name="Schmutz J."/>
            <person name="Larimer F."/>
            <person name="Land M."/>
            <person name="Hauser L."/>
            <person name="Kyrpides N."/>
            <person name="Mikhailova N."/>
            <person name="Sieprawska-Lupa M."/>
            <person name="Whitman W.B."/>
            <person name="Richardson P."/>
        </authorList>
    </citation>
    <scope>NUCLEOTIDE SEQUENCE [LARGE SCALE GENOMIC DNA]</scope>
    <source>
        <strain>C5 / ATCC BAA-1333</strain>
    </source>
</reference>
<comment type="function">
    <text evidence="1">Part of ribonuclease P, a protein complex that generates mature tRNA molecules by cleaving their 5'-ends.</text>
</comment>
<comment type="catalytic activity">
    <reaction evidence="1">
        <text>Endonucleolytic cleavage of RNA, removing 5'-extranucleotides from tRNA precursor.</text>
        <dbReference type="EC" id="3.1.26.5"/>
    </reaction>
</comment>
<comment type="subunit">
    <text evidence="1">Consists of a catalytic RNA component and at least 4-5 protein subunits.</text>
</comment>
<comment type="subcellular location">
    <subcellularLocation>
        <location evidence="1">Cytoplasm</location>
    </subcellularLocation>
</comment>
<comment type="similarity">
    <text evidence="1">Belongs to the eukaryotic/archaeal RNase P protein component 2 family.</text>
</comment>
<protein>
    <recommendedName>
        <fullName evidence="1">Ribonuclease P protein component 2</fullName>
        <shortName evidence="1">RNase P component 2</shortName>
        <ecNumber evidence="1">3.1.26.5</ecNumber>
    </recommendedName>
    <alternativeName>
        <fullName evidence="1">Pop5</fullName>
    </alternativeName>
</protein>
<gene>
    <name evidence="1" type="primary">rnp2</name>
    <name type="ordered locus">MmarC5_0686</name>
</gene>
<accession>A4FXR3</accession>
<proteinExistence type="inferred from homology"/>
<dbReference type="EC" id="3.1.26.5" evidence="1"/>
<dbReference type="EMBL" id="CP000609">
    <property type="protein sequence ID" value="ABO34997.1"/>
    <property type="molecule type" value="Genomic_DNA"/>
</dbReference>
<dbReference type="RefSeq" id="WP_011868451.1">
    <property type="nucleotide sequence ID" value="NC_009135.1"/>
</dbReference>
<dbReference type="SMR" id="A4FXR3"/>
<dbReference type="STRING" id="402880.MmarC5_0686"/>
<dbReference type="GeneID" id="4928122"/>
<dbReference type="KEGG" id="mmq:MmarC5_0686"/>
<dbReference type="eggNOG" id="arCOG01365">
    <property type="taxonomic scope" value="Archaea"/>
</dbReference>
<dbReference type="HOGENOM" id="CLU_137733_1_0_2"/>
<dbReference type="OrthoDB" id="19261at2157"/>
<dbReference type="Proteomes" id="UP000000253">
    <property type="component" value="Chromosome"/>
</dbReference>
<dbReference type="GO" id="GO:0005737">
    <property type="term" value="C:cytoplasm"/>
    <property type="evidence" value="ECO:0007669"/>
    <property type="project" value="UniProtKB-SubCell"/>
</dbReference>
<dbReference type="GO" id="GO:0030677">
    <property type="term" value="C:ribonuclease P complex"/>
    <property type="evidence" value="ECO:0007669"/>
    <property type="project" value="UniProtKB-UniRule"/>
</dbReference>
<dbReference type="GO" id="GO:0004526">
    <property type="term" value="F:ribonuclease P activity"/>
    <property type="evidence" value="ECO:0007669"/>
    <property type="project" value="UniProtKB-UniRule"/>
</dbReference>
<dbReference type="GO" id="GO:0001682">
    <property type="term" value="P:tRNA 5'-leader removal"/>
    <property type="evidence" value="ECO:0007669"/>
    <property type="project" value="UniProtKB-UniRule"/>
</dbReference>
<dbReference type="Gene3D" id="3.30.70.3250">
    <property type="entry name" value="Ribonuclease P, Pop5 subunit"/>
    <property type="match status" value="1"/>
</dbReference>
<dbReference type="HAMAP" id="MF_00755">
    <property type="entry name" value="RNase_P_2"/>
    <property type="match status" value="1"/>
</dbReference>
<dbReference type="InterPro" id="IPR002759">
    <property type="entry name" value="Pop5/Rpp14/Rnp2-like"/>
</dbReference>
<dbReference type="InterPro" id="IPR038085">
    <property type="entry name" value="Rnp2-like_sf"/>
</dbReference>
<dbReference type="InterPro" id="IPR016434">
    <property type="entry name" value="Rnp2_archaea"/>
</dbReference>
<dbReference type="PANTHER" id="PTHR15441">
    <property type="entry name" value="RIBONUCLEASE P PROTEIN SUBUNIT P14"/>
    <property type="match status" value="1"/>
</dbReference>
<dbReference type="PANTHER" id="PTHR15441:SF2">
    <property type="entry name" value="RIBONUCLEASE P_MRP PROTEIN SUBUNIT POP5"/>
    <property type="match status" value="1"/>
</dbReference>
<dbReference type="Pfam" id="PF01900">
    <property type="entry name" value="RNase_P_Rpp14"/>
    <property type="match status" value="1"/>
</dbReference>
<dbReference type="PIRSF" id="PIRSF004952">
    <property type="entry name" value="RNase_P_2"/>
    <property type="match status" value="1"/>
</dbReference>
<dbReference type="SUPFAM" id="SSF160350">
    <property type="entry name" value="Rnp2-like"/>
    <property type="match status" value="1"/>
</dbReference>
<sequence length="130" mass="15270">MLKTLPPTLREKKRYVALEIIFEEELFQKDVIAIVRNALMNYSGVLGCSRTNPWLIDYNHPYGILRISREEVNNLRSSLSLTNEHRKKPINIHIIGISNSVKHVREKFLHVPHEPYYKVIQKLKKKGPKK</sequence>
<evidence type="ECO:0000255" key="1">
    <source>
        <dbReference type="HAMAP-Rule" id="MF_00755"/>
    </source>
</evidence>
<name>RNP2_METM5</name>
<feature type="chain" id="PRO_1000046622" description="Ribonuclease P protein component 2">
    <location>
        <begin position="1"/>
        <end position="130"/>
    </location>
</feature>
<organism>
    <name type="scientific">Methanococcus maripaludis (strain C5 / ATCC BAA-1333)</name>
    <dbReference type="NCBI Taxonomy" id="402880"/>
    <lineage>
        <taxon>Archaea</taxon>
        <taxon>Methanobacteriati</taxon>
        <taxon>Methanobacteriota</taxon>
        <taxon>Methanomada group</taxon>
        <taxon>Methanococci</taxon>
        <taxon>Methanococcales</taxon>
        <taxon>Methanococcaceae</taxon>
        <taxon>Methanococcus</taxon>
    </lineage>
</organism>
<keyword id="KW-0963">Cytoplasm</keyword>
<keyword id="KW-0255">Endonuclease</keyword>
<keyword id="KW-0378">Hydrolase</keyword>
<keyword id="KW-0540">Nuclease</keyword>
<keyword id="KW-0819">tRNA processing</keyword>